<reference key="1">
    <citation type="journal article" date="2006" name="PLoS Genet.">
        <title>Who ate whom? Adaptive Helicobacter genomic changes that accompanied a host jump from early humans to large felines.</title>
        <authorList>
            <person name="Eppinger M."/>
            <person name="Baar C."/>
            <person name="Linz B."/>
            <person name="Raddatz G."/>
            <person name="Lanz C."/>
            <person name="Keller H."/>
            <person name="Morelli G."/>
            <person name="Gressmann H."/>
            <person name="Achtman M."/>
            <person name="Schuster S.C."/>
        </authorList>
    </citation>
    <scope>NUCLEOTIDE SEQUENCE [LARGE SCALE GENOMIC DNA]</scope>
    <source>
        <strain>Sheeba</strain>
    </source>
</reference>
<keyword id="KW-0687">Ribonucleoprotein</keyword>
<keyword id="KW-0689">Ribosomal protein</keyword>
<keyword id="KW-0694">RNA-binding</keyword>
<keyword id="KW-0699">rRNA-binding</keyword>
<proteinExistence type="inferred from homology"/>
<feature type="chain" id="PRO_1000055593" description="Large ribosomal subunit protein uL14">
    <location>
        <begin position="1"/>
        <end position="122"/>
    </location>
</feature>
<evidence type="ECO:0000255" key="1">
    <source>
        <dbReference type="HAMAP-Rule" id="MF_01367"/>
    </source>
</evidence>
<evidence type="ECO:0000305" key="2"/>
<sequence>MIQSFTRLNVADNSGAKEIMCIKVLGGSHKRYASVGSVIVASVKKAIPNGKVKRGQVVKAVVVRTKKEIQRKNGSLVRFDDNAAVILDAKKDPVGTRIFGPVSREVRYANFMKIISLAPEVV</sequence>
<dbReference type="EMBL" id="AM260522">
    <property type="protein sequence ID" value="CAJ98998.1"/>
    <property type="molecule type" value="Genomic_DNA"/>
</dbReference>
<dbReference type="RefSeq" id="WP_000616110.1">
    <property type="nucleotide sequence ID" value="NC_008229.1"/>
</dbReference>
<dbReference type="SMR" id="Q17ZC8"/>
<dbReference type="STRING" id="382638.Hac_0146"/>
<dbReference type="GeneID" id="31757675"/>
<dbReference type="KEGG" id="hac:Hac_0146"/>
<dbReference type="eggNOG" id="COG0093">
    <property type="taxonomic scope" value="Bacteria"/>
</dbReference>
<dbReference type="HOGENOM" id="CLU_095071_2_1_7"/>
<dbReference type="OrthoDB" id="9806379at2"/>
<dbReference type="BioCyc" id="HACI382638:HAC_RS00630-MONOMER"/>
<dbReference type="Proteomes" id="UP000000775">
    <property type="component" value="Chromosome"/>
</dbReference>
<dbReference type="GO" id="GO:0022625">
    <property type="term" value="C:cytosolic large ribosomal subunit"/>
    <property type="evidence" value="ECO:0007669"/>
    <property type="project" value="TreeGrafter"/>
</dbReference>
<dbReference type="GO" id="GO:0070180">
    <property type="term" value="F:large ribosomal subunit rRNA binding"/>
    <property type="evidence" value="ECO:0007669"/>
    <property type="project" value="TreeGrafter"/>
</dbReference>
<dbReference type="GO" id="GO:0003735">
    <property type="term" value="F:structural constituent of ribosome"/>
    <property type="evidence" value="ECO:0007669"/>
    <property type="project" value="InterPro"/>
</dbReference>
<dbReference type="GO" id="GO:0006412">
    <property type="term" value="P:translation"/>
    <property type="evidence" value="ECO:0007669"/>
    <property type="project" value="UniProtKB-UniRule"/>
</dbReference>
<dbReference type="CDD" id="cd00337">
    <property type="entry name" value="Ribosomal_uL14"/>
    <property type="match status" value="1"/>
</dbReference>
<dbReference type="FunFam" id="2.40.150.20:FF:000001">
    <property type="entry name" value="50S ribosomal protein L14"/>
    <property type="match status" value="1"/>
</dbReference>
<dbReference type="Gene3D" id="2.40.150.20">
    <property type="entry name" value="Ribosomal protein L14"/>
    <property type="match status" value="1"/>
</dbReference>
<dbReference type="HAMAP" id="MF_01367">
    <property type="entry name" value="Ribosomal_uL14"/>
    <property type="match status" value="1"/>
</dbReference>
<dbReference type="InterPro" id="IPR000218">
    <property type="entry name" value="Ribosomal_uL14"/>
</dbReference>
<dbReference type="InterPro" id="IPR005745">
    <property type="entry name" value="Ribosomal_uL14_bac-type"/>
</dbReference>
<dbReference type="InterPro" id="IPR019972">
    <property type="entry name" value="Ribosomal_uL14_CS"/>
</dbReference>
<dbReference type="InterPro" id="IPR036853">
    <property type="entry name" value="Ribosomal_uL14_sf"/>
</dbReference>
<dbReference type="NCBIfam" id="TIGR01067">
    <property type="entry name" value="rplN_bact"/>
    <property type="match status" value="1"/>
</dbReference>
<dbReference type="PANTHER" id="PTHR11761">
    <property type="entry name" value="50S/60S RIBOSOMAL PROTEIN L14/L23"/>
    <property type="match status" value="1"/>
</dbReference>
<dbReference type="PANTHER" id="PTHR11761:SF3">
    <property type="entry name" value="LARGE RIBOSOMAL SUBUNIT PROTEIN UL14M"/>
    <property type="match status" value="1"/>
</dbReference>
<dbReference type="Pfam" id="PF00238">
    <property type="entry name" value="Ribosomal_L14"/>
    <property type="match status" value="1"/>
</dbReference>
<dbReference type="SMART" id="SM01374">
    <property type="entry name" value="Ribosomal_L14"/>
    <property type="match status" value="1"/>
</dbReference>
<dbReference type="SUPFAM" id="SSF50193">
    <property type="entry name" value="Ribosomal protein L14"/>
    <property type="match status" value="1"/>
</dbReference>
<dbReference type="PROSITE" id="PS00049">
    <property type="entry name" value="RIBOSOMAL_L14"/>
    <property type="match status" value="1"/>
</dbReference>
<gene>
    <name evidence="1" type="primary">rplN</name>
    <name type="ordered locus">Hac_0146</name>
</gene>
<organism>
    <name type="scientific">Helicobacter acinonychis (strain Sheeba)</name>
    <dbReference type="NCBI Taxonomy" id="382638"/>
    <lineage>
        <taxon>Bacteria</taxon>
        <taxon>Pseudomonadati</taxon>
        <taxon>Campylobacterota</taxon>
        <taxon>Epsilonproteobacteria</taxon>
        <taxon>Campylobacterales</taxon>
        <taxon>Helicobacteraceae</taxon>
        <taxon>Helicobacter</taxon>
    </lineage>
</organism>
<comment type="function">
    <text evidence="1">Binds to 23S rRNA. Forms part of two intersubunit bridges in the 70S ribosome.</text>
</comment>
<comment type="subunit">
    <text evidence="1">Part of the 50S ribosomal subunit. Forms a cluster with proteins L3 and L19. In the 70S ribosome, L14 and L19 interact and together make contacts with the 16S rRNA in bridges B5 and B8.</text>
</comment>
<comment type="similarity">
    <text evidence="1">Belongs to the universal ribosomal protein uL14 family.</text>
</comment>
<accession>Q17ZC8</accession>
<name>RL14_HELAH</name>
<protein>
    <recommendedName>
        <fullName evidence="1">Large ribosomal subunit protein uL14</fullName>
    </recommendedName>
    <alternativeName>
        <fullName evidence="2">50S ribosomal protein L14</fullName>
    </alternativeName>
</protein>